<reference key="1">
    <citation type="journal article" date="2007" name="Plant Cell">
        <title>Dothideomycete-plant interactions illuminated by genome sequencing and EST analysis of the wheat pathogen Stagonospora nodorum.</title>
        <authorList>
            <person name="Hane J.K."/>
            <person name="Lowe R.G.T."/>
            <person name="Solomon P.S."/>
            <person name="Tan K.-C."/>
            <person name="Schoch C.L."/>
            <person name="Spatafora J.W."/>
            <person name="Crous P.W."/>
            <person name="Kodira C.D."/>
            <person name="Birren B.W."/>
            <person name="Galagan J.E."/>
            <person name="Torriani S.F.F."/>
            <person name="McDonald B.A."/>
            <person name="Oliver R.P."/>
        </authorList>
    </citation>
    <scope>NUCLEOTIDE SEQUENCE [LARGE SCALE GENOMIC DNA]</scope>
    <source>
        <strain>SN15 / ATCC MYA-4574 / FGSC 10173</strain>
    </source>
</reference>
<feature type="chain" id="PRO_0000317912" description="Autophagy-related protein 9">
    <location>
        <begin position="1"/>
        <end position="899"/>
    </location>
</feature>
<feature type="topological domain" description="Cytoplasmic" evidence="5">
    <location>
        <begin position="1"/>
        <end position="224"/>
    </location>
</feature>
<feature type="transmembrane region" description="Helical" evidence="3">
    <location>
        <begin position="225"/>
        <end position="245"/>
    </location>
</feature>
<feature type="topological domain" description="Lumenal" evidence="5">
    <location>
        <begin position="246"/>
        <end position="270"/>
    </location>
</feature>
<feature type="transmembrane region" description="Helical" evidence="3">
    <location>
        <begin position="271"/>
        <end position="291"/>
    </location>
</feature>
<feature type="topological domain" description="Cytoplasmic" evidence="5">
    <location>
        <begin position="292"/>
        <end position="441"/>
    </location>
</feature>
<feature type="intramembrane region" evidence="1">
    <location>
        <begin position="442"/>
        <end position="462"/>
    </location>
</feature>
<feature type="topological domain" description="Cytoplasmic" evidence="5">
    <location>
        <begin position="463"/>
        <end position="527"/>
    </location>
</feature>
<feature type="transmembrane region" description="Helical" evidence="3">
    <location>
        <begin position="528"/>
        <end position="548"/>
    </location>
</feature>
<feature type="topological domain" description="Lumenal" evidence="5">
    <location>
        <begin position="549"/>
        <end position="552"/>
    </location>
</feature>
<feature type="transmembrane region" description="Helical" evidence="3">
    <location>
        <begin position="553"/>
        <end position="573"/>
    </location>
</feature>
<feature type="topological domain" description="Cytoplasmic" evidence="5">
    <location>
        <begin position="574"/>
        <end position="629"/>
    </location>
</feature>
<feature type="intramembrane region" evidence="1">
    <location>
        <begin position="630"/>
        <end position="650"/>
    </location>
</feature>
<feature type="topological domain" description="Cytoplasmic" evidence="5">
    <location>
        <begin position="651"/>
        <end position="899"/>
    </location>
</feature>
<feature type="region of interest" description="Disordered" evidence="4">
    <location>
        <begin position="1"/>
        <end position="173"/>
    </location>
</feature>
<feature type="region of interest" description="Disordered" evidence="4">
    <location>
        <begin position="769"/>
        <end position="876"/>
    </location>
</feature>
<feature type="compositionally biased region" description="Low complexity" evidence="4">
    <location>
        <begin position="23"/>
        <end position="33"/>
    </location>
</feature>
<feature type="compositionally biased region" description="Polar residues" evidence="4">
    <location>
        <begin position="63"/>
        <end position="73"/>
    </location>
</feature>
<feature type="compositionally biased region" description="Low complexity" evidence="4">
    <location>
        <begin position="90"/>
        <end position="104"/>
    </location>
</feature>
<feature type="compositionally biased region" description="Pro residues" evidence="4">
    <location>
        <begin position="124"/>
        <end position="142"/>
    </location>
</feature>
<feature type="compositionally biased region" description="Polar residues" evidence="4">
    <location>
        <begin position="151"/>
        <end position="160"/>
    </location>
</feature>
<feature type="compositionally biased region" description="Polar residues" evidence="4">
    <location>
        <begin position="851"/>
        <end position="860"/>
    </location>
</feature>
<name>ATG9_PHANO</name>
<sequence length="899" mass="101537">MASNLLSRLLPSASDDLLEQEASNNQNRRTSSSTDERPDMDIDEENFGARFEAQDLNDLLAEASSSHMTTESRAASPEARRNAPPGINTAARAPAWRQPAPARAVPLDDDDDVPQSLLLEGGLDPPPNPHPRPDGLPPPVPGPSTRHTRAQWETTRQQQRLHGDDRGGAPVRDWGAIGRGGQFTADPKEKASWLWVNQTDLDTYMREVYEYYVGSGIYSMILRRTLSLLQSAFVVGFMTFLGWCIDYSKLSGSNKLSQVLVPKCTKEIHGFWIFALWVFTIYWLYSFYGLLTDIPRLRAMHDFYHYLLDVPDRDIQTIQWQQIVSRIMALRDLNLTTASNLSPETRKLLDSKSRQRLDAVDIASRLMRRDNYLIALFNKEILDVTVPIPFLGNRFIFSETTGWHVNLAVMEFVFSGPNGQFNQDFLKERNRRELVRRLRGRFFWTGIISIICAPFAVVFVLASYLFKYFTEYHKDPGQLSNRDFTTFAQWKFREFNELPHLFNRRRNMAYPYANLYLAQFPKDKTEQISSFVAFIAGAFASVLVAFTLLDSELFLTFEISPGKTAIFWIGVLTTIYRVARGSSPQEDQVTDPSYYLDHVIYHTRYKPDSWQDRLHTDEVRAEFAKLYQPKILIFAEEILSMVVTPFLLMFRLPQCSERIVDFFREFSIVVDGLGVTCSYSMFPFKKGTQNVNNAPANRSGAHKDDGDLREDYFMAKDNKMLASYYGFLDTYATTGKGNSARLPGRAGFHPPPQFPNAFGAMSQTAQPVDVGARGTSRGPAGRQPLQRRTPRSGPAGRDEPIASVLLDPHHQPSSASILRGSPRTGPSGRYRTPLQPVADTPGTRIEEESTIGDSWRTSRLAQDDDEEEEAPGANRGGVLQLLQQFSKAQAEGRGAGVGV</sequence>
<comment type="function">
    <text evidence="2">Phospholipid scramblase involved in autophagy and cytoplasm to vacuole transport (Cvt) vesicle formation. Cycles between the preautophagosomal structure/phagophore assembly site (PAS) and the cytoplasmic vesicle pool and supplies membrane for the growing autophagosome. Lipid scramblase activity plays a key role in preautophagosomal structure/phagophore assembly by distributing the phospholipids that arrive through ATG2 from the cytoplasmic to the luminal leaflet of the bilayer, thereby driving autophagosomal membrane expansion. Required for mitophagy. Also involved in endoplasmic reticulum-specific autophagic process and is essential for the survival of cells subjected to severe ER stress. Different machineries are required for anterograde trafficking to the PAS during either the Cvt pathway or bulk autophagy and for retrograde trafficking.</text>
</comment>
<comment type="catalytic activity">
    <reaction evidence="2">
        <text>a 1,2-diacyl-sn-glycero-3-phosphocholine(in) = a 1,2-diacyl-sn-glycero-3-phosphocholine(out)</text>
        <dbReference type="Rhea" id="RHEA:38571"/>
        <dbReference type="ChEBI" id="CHEBI:57643"/>
    </reaction>
</comment>
<comment type="catalytic activity">
    <reaction evidence="2">
        <text>a 1,2-diacyl-sn-glycero-3-phospho-L-serine(in) = a 1,2-diacyl-sn-glycero-3-phospho-L-serine(out)</text>
        <dbReference type="Rhea" id="RHEA:38663"/>
        <dbReference type="ChEBI" id="CHEBI:57262"/>
    </reaction>
</comment>
<comment type="catalytic activity">
    <reaction evidence="2">
        <text>a 1,2-diacyl-sn-glycero-3-phosphoethanolamine(in) = a 1,2-diacyl-sn-glycero-3-phosphoethanolamine(out)</text>
        <dbReference type="Rhea" id="RHEA:38895"/>
        <dbReference type="ChEBI" id="CHEBI:64612"/>
    </reaction>
</comment>
<comment type="catalytic activity">
    <reaction evidence="2">
        <text>a 1,2-diacyl-sn-glycero-3-phospho-(1D-myo-inositol-3-phosphate)(in) = a 1,2-diacyl-sn-glycero-3-phospho-(1D-myo-inositol-3-phosphate)(out)</text>
        <dbReference type="Rhea" id="RHEA:67920"/>
        <dbReference type="ChEBI" id="CHEBI:58088"/>
    </reaction>
</comment>
<comment type="subunit">
    <text evidence="1">Homotrimer; forms a homotrimer with a central pore that forms a path between the two membrane leaflets.</text>
</comment>
<comment type="subcellular location">
    <subcellularLocation>
        <location evidence="2">Preautophagosomal structure membrane</location>
        <topology evidence="2">Multi-pass membrane protein</topology>
    </subcellularLocation>
    <subcellularLocation>
        <location evidence="2">Cytoplasmic vesicle membrane</location>
        <topology evidence="2">Multi-pass membrane protein</topology>
    </subcellularLocation>
    <subcellularLocation>
        <location evidence="2">Golgi apparatus membrane</location>
        <topology evidence="2">Multi-pass membrane protein</topology>
    </subcellularLocation>
    <subcellularLocation>
        <location evidence="2">Endoplasmic reticulum membrane</location>
        <topology evidence="2">Multi-pass membrane protein</topology>
    </subcellularLocation>
</comment>
<comment type="domain">
    <text evidence="1">Forms a homotrimer with a solvated central pore, which is connected laterally to the cytosol through the cavity within each protomer. Acts as a lipid scramblase that uses its central pore to function: the central pore opens laterally to accommodate lipid headgroups, thereby enabling lipid flipping and redistribution of lipids added to the outer leaflet of ATG9-containing vesicles, thereby enabling growth into autophagosomes.</text>
</comment>
<comment type="PTM">
    <text evidence="2">Phosphorylated by ATG1. ATG1 phosphorylation is required for preautophagosome elongation.</text>
</comment>
<comment type="similarity">
    <text evidence="5">Belongs to the ATG9 family.</text>
</comment>
<comment type="sequence caution" evidence="5">
    <conflict type="erroneous gene model prediction">
        <sequence resource="EMBL-CDS" id="EAT89883"/>
    </conflict>
</comment>
<dbReference type="EMBL" id="CH445328">
    <property type="protein sequence ID" value="EAT89883.2"/>
    <property type="status" value="ALT_SEQ"/>
    <property type="molecule type" value="Genomic_DNA"/>
</dbReference>
<dbReference type="RefSeq" id="XP_001793733.1">
    <property type="nucleotide sequence ID" value="XM_001793681.1"/>
</dbReference>
<dbReference type="SMR" id="Q0UYL2"/>
<dbReference type="FunCoup" id="Q0UYL2">
    <property type="interactions" value="216"/>
</dbReference>
<dbReference type="STRING" id="321614.Q0UYL2"/>
<dbReference type="GeneID" id="5970590"/>
<dbReference type="KEGG" id="pno:SNOG_03152"/>
<dbReference type="VEuPathDB" id="FungiDB:JI435_031520"/>
<dbReference type="eggNOG" id="KOG2173">
    <property type="taxonomic scope" value="Eukaryota"/>
</dbReference>
<dbReference type="InParanoid" id="Q0UYL2"/>
<dbReference type="OMA" id="MMHYFFR"/>
<dbReference type="OrthoDB" id="2020634at2759"/>
<dbReference type="Proteomes" id="UP000001055">
    <property type="component" value="Unassembled WGS sequence"/>
</dbReference>
<dbReference type="GO" id="GO:0005776">
    <property type="term" value="C:autophagosome"/>
    <property type="evidence" value="ECO:0000318"/>
    <property type="project" value="GO_Central"/>
</dbReference>
<dbReference type="GO" id="GO:0030659">
    <property type="term" value="C:cytoplasmic vesicle membrane"/>
    <property type="evidence" value="ECO:0007669"/>
    <property type="project" value="UniProtKB-SubCell"/>
</dbReference>
<dbReference type="GO" id="GO:0005789">
    <property type="term" value="C:endoplasmic reticulum membrane"/>
    <property type="evidence" value="ECO:0007669"/>
    <property type="project" value="UniProtKB-SubCell"/>
</dbReference>
<dbReference type="GO" id="GO:0000139">
    <property type="term" value="C:Golgi membrane"/>
    <property type="evidence" value="ECO:0007669"/>
    <property type="project" value="UniProtKB-SubCell"/>
</dbReference>
<dbReference type="GO" id="GO:0000407">
    <property type="term" value="C:phagophore assembly site"/>
    <property type="evidence" value="ECO:0000318"/>
    <property type="project" value="GO_Central"/>
</dbReference>
<dbReference type="GO" id="GO:0034045">
    <property type="term" value="C:phagophore assembly site membrane"/>
    <property type="evidence" value="ECO:0007669"/>
    <property type="project" value="UniProtKB-SubCell"/>
</dbReference>
<dbReference type="GO" id="GO:0006869">
    <property type="term" value="P:lipid transport"/>
    <property type="evidence" value="ECO:0007669"/>
    <property type="project" value="UniProtKB-KW"/>
</dbReference>
<dbReference type="GO" id="GO:0000423">
    <property type="term" value="P:mitophagy"/>
    <property type="evidence" value="ECO:0000318"/>
    <property type="project" value="GO_Central"/>
</dbReference>
<dbReference type="GO" id="GO:0034727">
    <property type="term" value="P:piecemeal microautophagy of the nucleus"/>
    <property type="evidence" value="ECO:0000318"/>
    <property type="project" value="GO_Central"/>
</dbReference>
<dbReference type="GO" id="GO:0034497">
    <property type="term" value="P:protein localization to phagophore assembly site"/>
    <property type="evidence" value="ECO:0000318"/>
    <property type="project" value="GO_Central"/>
</dbReference>
<dbReference type="GO" id="GO:0061709">
    <property type="term" value="P:reticulophagy"/>
    <property type="evidence" value="ECO:0000318"/>
    <property type="project" value="GO_Central"/>
</dbReference>
<dbReference type="InterPro" id="IPR007241">
    <property type="entry name" value="Autophagy-rel_prot_9"/>
</dbReference>
<dbReference type="PANTHER" id="PTHR13038">
    <property type="entry name" value="APG9 AUTOPHAGY 9"/>
    <property type="match status" value="1"/>
</dbReference>
<dbReference type="PANTHER" id="PTHR13038:SF10">
    <property type="entry name" value="AUTOPHAGY-RELATED PROTEIN 9"/>
    <property type="match status" value="1"/>
</dbReference>
<dbReference type="Pfam" id="PF04109">
    <property type="entry name" value="ATG9"/>
    <property type="match status" value="1"/>
</dbReference>
<evidence type="ECO:0000250" key="1">
    <source>
        <dbReference type="UniProtKB" id="O74312"/>
    </source>
</evidence>
<evidence type="ECO:0000250" key="2">
    <source>
        <dbReference type="UniProtKB" id="Q12142"/>
    </source>
</evidence>
<evidence type="ECO:0000255" key="3"/>
<evidence type="ECO:0000256" key="4">
    <source>
        <dbReference type="SAM" id="MobiDB-lite"/>
    </source>
</evidence>
<evidence type="ECO:0000305" key="5"/>
<protein>
    <recommendedName>
        <fullName>Autophagy-related protein 9</fullName>
    </recommendedName>
</protein>
<proteinExistence type="inferred from homology"/>
<keyword id="KW-0072">Autophagy</keyword>
<keyword id="KW-0968">Cytoplasmic vesicle</keyword>
<keyword id="KW-0256">Endoplasmic reticulum</keyword>
<keyword id="KW-0333">Golgi apparatus</keyword>
<keyword id="KW-0445">Lipid transport</keyword>
<keyword id="KW-0472">Membrane</keyword>
<keyword id="KW-0597">Phosphoprotein</keyword>
<keyword id="KW-0812">Transmembrane</keyword>
<keyword id="KW-1133">Transmembrane helix</keyword>
<keyword id="KW-0813">Transport</keyword>
<gene>
    <name type="primary">ATG9</name>
    <name type="ORF">SNOG_03152</name>
</gene>
<accession>Q0UYL2</accession>
<organism>
    <name type="scientific">Phaeosphaeria nodorum (strain SN15 / ATCC MYA-4574 / FGSC 10173)</name>
    <name type="common">Glume blotch fungus</name>
    <name type="synonym">Parastagonospora nodorum</name>
    <dbReference type="NCBI Taxonomy" id="321614"/>
    <lineage>
        <taxon>Eukaryota</taxon>
        <taxon>Fungi</taxon>
        <taxon>Dikarya</taxon>
        <taxon>Ascomycota</taxon>
        <taxon>Pezizomycotina</taxon>
        <taxon>Dothideomycetes</taxon>
        <taxon>Pleosporomycetidae</taxon>
        <taxon>Pleosporales</taxon>
        <taxon>Pleosporineae</taxon>
        <taxon>Phaeosphaeriaceae</taxon>
        <taxon>Parastagonospora</taxon>
    </lineage>
</organism>